<feature type="chain" id="PRO_0000183832" description="Cytochrome c oxidase subunit 3">
    <location>
        <begin position="1"/>
        <end position="269"/>
    </location>
</feature>
<feature type="transmembrane region" description="Helical" evidence="2">
    <location>
        <begin position="21"/>
        <end position="41"/>
    </location>
</feature>
<feature type="transmembrane region" description="Helical" evidence="2">
    <location>
        <begin position="45"/>
        <end position="65"/>
    </location>
</feature>
<feature type="transmembrane region" description="Helical" evidence="2">
    <location>
        <begin position="90"/>
        <end position="110"/>
    </location>
</feature>
<feature type="transmembrane region" description="Helical" evidence="2">
    <location>
        <begin position="127"/>
        <end position="147"/>
    </location>
</feature>
<feature type="transmembrane region" description="Helical" evidence="2">
    <location>
        <begin position="167"/>
        <end position="187"/>
    </location>
</feature>
<feature type="transmembrane region" description="Helical" evidence="2">
    <location>
        <begin position="204"/>
        <end position="224"/>
    </location>
</feature>
<feature type="transmembrane region" description="Helical" evidence="2">
    <location>
        <begin position="247"/>
        <end position="267"/>
    </location>
</feature>
<proteinExistence type="inferred from homology"/>
<name>COX3_WICCA</name>
<accession>P48874</accession>
<gene>
    <name type="primary">COX3</name>
</gene>
<organism>
    <name type="scientific">Wickerhamomyces canadensis</name>
    <name type="common">Yeast</name>
    <name type="synonym">Pichia canadensis</name>
    <dbReference type="NCBI Taxonomy" id="1156965"/>
    <lineage>
        <taxon>Eukaryota</taxon>
        <taxon>Fungi</taxon>
        <taxon>Dikarya</taxon>
        <taxon>Ascomycota</taxon>
        <taxon>Saccharomycotina</taxon>
        <taxon>Saccharomycetes</taxon>
        <taxon>Phaffomycetales</taxon>
        <taxon>Wickerhamomycetaceae</taxon>
        <taxon>Wickerhamomyces</taxon>
    </lineage>
</organism>
<geneLocation type="mitochondrion"/>
<protein>
    <recommendedName>
        <fullName>Cytochrome c oxidase subunit 3</fullName>
        <ecNumber>7.1.1.9</ecNumber>
    </recommendedName>
    <alternativeName>
        <fullName>Cytochrome c oxidase polypeptide III</fullName>
    </alternativeName>
</protein>
<keyword id="KW-0472">Membrane</keyword>
<keyword id="KW-0496">Mitochondrion</keyword>
<keyword id="KW-0999">Mitochondrion inner membrane</keyword>
<keyword id="KW-1278">Translocase</keyword>
<keyword id="KW-0812">Transmembrane</keyword>
<keyword id="KW-1133">Transmembrane helix</keyword>
<sequence length="269" mass="30467">MTHLERSRHQLFPFHLVSPSPWPITVSFALMSFALSLGLTMHGYIVGNSVLFTSIILVLYSMTMWFRDIIAEGTYLGDHTLAVRKGLNYGFLLFVVSEILIFAGIFWAYFHSAMSPAIEIGGVWPPVGITAIGATELPLLNTIILLASGATITYSHHATIEGNRNHALNGLFITLWLIVIFVVCQYIEYTNAPFTISDGVYGSVFFAGTGLHFLHMGMLIIMLAVCYWRMRQYHFTTGHHVNYETTILYLHVLDVIWLFLYIVMYWWGA</sequence>
<reference key="1">
    <citation type="journal article" date="1995" name="Curr. Genet.">
        <title>The complete mitochondrial DNA sequence of Hansenula wingei reveals new characteristics of yeast mitochondria.</title>
        <authorList>
            <person name="Sekito T."/>
            <person name="Okamoto K."/>
            <person name="Kitano H."/>
            <person name="Yoshida K."/>
        </authorList>
    </citation>
    <scope>NUCLEOTIDE SEQUENCE [LARGE SCALE GENOMIC DNA]</scope>
    <source>
        <strain>21</strain>
    </source>
</reference>
<comment type="function">
    <text evidence="1">Component of the cytochrome c oxidase, the last enzyme in the mitochondrial electron transport chain which drives oxidative phosphorylation. The respiratory chain contains 3 multisubunit complexes succinate dehydrogenase (complex II, CII), ubiquinol-cytochrome c oxidoreductase (cytochrome b-c1 complex, complex III, CIII) and cytochrome c oxidase (complex IV, CIV), that cooperate to transfer electrons derived from NADH and succinate to molecular oxygen, creating an electrochemical gradient over the inner membrane that drives transmembrane transport and the ATP synthase. Cytochrome c oxidase is the component of the respiratory chain that catalyzes the reduction of oxygen to water. Electrons originating from reduced cytochrome c in the intermembrane space (IMS) are transferred via the dinuclear copper A center (CU(A)) of subunit 2 and heme A of subunit 1 to the active site in subunit 1, a binuclear center (BNC) formed by heme A3 and copper B (CU(B)). The BNC reduces molecular oxygen to 2 water molecules using 4 electrons from cytochrome c in the IMS and 4 protons from the mitochondrial matrix.</text>
</comment>
<comment type="catalytic activity">
    <reaction evidence="1">
        <text>4 Fe(II)-[cytochrome c] + O2 + 8 H(+)(in) = 4 Fe(III)-[cytochrome c] + 2 H2O + 4 H(+)(out)</text>
        <dbReference type="Rhea" id="RHEA:11436"/>
        <dbReference type="Rhea" id="RHEA-COMP:10350"/>
        <dbReference type="Rhea" id="RHEA-COMP:14399"/>
        <dbReference type="ChEBI" id="CHEBI:15377"/>
        <dbReference type="ChEBI" id="CHEBI:15378"/>
        <dbReference type="ChEBI" id="CHEBI:15379"/>
        <dbReference type="ChEBI" id="CHEBI:29033"/>
        <dbReference type="ChEBI" id="CHEBI:29034"/>
        <dbReference type="EC" id="7.1.1.9"/>
    </reaction>
    <physiologicalReaction direction="left-to-right" evidence="1">
        <dbReference type="Rhea" id="RHEA:11437"/>
    </physiologicalReaction>
</comment>
<comment type="subunit">
    <text evidence="1">Component of the cytochrome c oxidase (complex IV, CIV), a multisubunit enzyme composed of a catalytic core of 3 subunits and several supernumerary subunits. The complex exists as a monomer or a dimer and forms supercomplexes (SCs) in the inner mitochondrial membrane with ubiquinol-cytochrome c oxidoreductase (cytochrome b-c1 complex, complex III, CIII).</text>
</comment>
<comment type="subcellular location">
    <subcellularLocation>
        <location evidence="1">Mitochondrion inner membrane</location>
        <topology evidence="1">Multi-pass membrane protein</topology>
    </subcellularLocation>
</comment>
<comment type="similarity">
    <text evidence="3">Belongs to the cytochrome c oxidase subunit 3 family.</text>
</comment>
<dbReference type="EC" id="7.1.1.9"/>
<dbReference type="EMBL" id="D31785">
    <property type="protein sequence ID" value="BAA06569.2"/>
    <property type="molecule type" value="Genomic_DNA"/>
</dbReference>
<dbReference type="PIR" id="S58746">
    <property type="entry name" value="S58746"/>
</dbReference>
<dbReference type="RefSeq" id="NP_038214.1">
    <property type="nucleotide sequence ID" value="NC_001762.1"/>
</dbReference>
<dbReference type="SMR" id="P48874"/>
<dbReference type="GeneID" id="800535"/>
<dbReference type="GO" id="GO:0005743">
    <property type="term" value="C:mitochondrial inner membrane"/>
    <property type="evidence" value="ECO:0007669"/>
    <property type="project" value="UniProtKB-SubCell"/>
</dbReference>
<dbReference type="GO" id="GO:0004129">
    <property type="term" value="F:cytochrome-c oxidase activity"/>
    <property type="evidence" value="ECO:0007669"/>
    <property type="project" value="UniProtKB-EC"/>
</dbReference>
<dbReference type="GO" id="GO:0006123">
    <property type="term" value="P:mitochondrial electron transport, cytochrome c to oxygen"/>
    <property type="evidence" value="ECO:0007669"/>
    <property type="project" value="TreeGrafter"/>
</dbReference>
<dbReference type="CDD" id="cd01665">
    <property type="entry name" value="Cyt_c_Oxidase_III"/>
    <property type="match status" value="1"/>
</dbReference>
<dbReference type="FunFam" id="1.10.287.70:FF:000082">
    <property type="entry name" value="Cytochrome c oxidase subunit 3"/>
    <property type="match status" value="1"/>
</dbReference>
<dbReference type="FunFam" id="1.20.120.80:FF:000002">
    <property type="entry name" value="Cytochrome c oxidase subunit 3"/>
    <property type="match status" value="1"/>
</dbReference>
<dbReference type="Gene3D" id="1.10.287.70">
    <property type="match status" value="1"/>
</dbReference>
<dbReference type="Gene3D" id="1.20.120.80">
    <property type="entry name" value="Cytochrome c oxidase, subunit III, four-helix bundle"/>
    <property type="match status" value="1"/>
</dbReference>
<dbReference type="InterPro" id="IPR024791">
    <property type="entry name" value="Cyt_c/ubiquinol_Oxase_su3"/>
</dbReference>
<dbReference type="InterPro" id="IPR033945">
    <property type="entry name" value="Cyt_c_oxase_su3_dom"/>
</dbReference>
<dbReference type="InterPro" id="IPR000298">
    <property type="entry name" value="Cyt_c_oxidase-like_su3"/>
</dbReference>
<dbReference type="InterPro" id="IPR035973">
    <property type="entry name" value="Cyt_c_oxidase_su3-like_sf"/>
</dbReference>
<dbReference type="InterPro" id="IPR013833">
    <property type="entry name" value="Cyt_c_oxidase_su3_a-hlx"/>
</dbReference>
<dbReference type="PANTHER" id="PTHR11403:SF7">
    <property type="entry name" value="CYTOCHROME C OXIDASE SUBUNIT 3"/>
    <property type="match status" value="1"/>
</dbReference>
<dbReference type="PANTHER" id="PTHR11403">
    <property type="entry name" value="CYTOCHROME C OXIDASE SUBUNIT III"/>
    <property type="match status" value="1"/>
</dbReference>
<dbReference type="Pfam" id="PF00510">
    <property type="entry name" value="COX3"/>
    <property type="match status" value="1"/>
</dbReference>
<dbReference type="SUPFAM" id="SSF81452">
    <property type="entry name" value="Cytochrome c oxidase subunit III-like"/>
    <property type="match status" value="1"/>
</dbReference>
<dbReference type="PROSITE" id="PS50253">
    <property type="entry name" value="COX3"/>
    <property type="match status" value="1"/>
</dbReference>
<evidence type="ECO:0000250" key="1">
    <source>
        <dbReference type="UniProtKB" id="P00420"/>
    </source>
</evidence>
<evidence type="ECO:0000255" key="2"/>
<evidence type="ECO:0000305" key="3"/>